<reference key="1">
    <citation type="journal article" date="2008" name="Plant Cell">
        <title>EST analysis of hop glandular trichomes identifies an O-methyltransferase that catalyzes the biosynthesis of xanthohumol.</title>
        <authorList>
            <person name="Nagel J."/>
            <person name="Culley L.K."/>
            <person name="Lu Y."/>
            <person name="Liu E."/>
            <person name="Matthews P.D."/>
            <person name="Stevens J.F."/>
            <person name="Page J.E."/>
        </authorList>
    </citation>
    <scope>NUCLEOTIDE SEQUENCE [MRNA]</scope>
    <scope>FUNCTION</scope>
    <scope>TISSUE SPECIFICITY</scope>
    <scope>SUBSTRATE SPECIFICITY</scope>
    <scope>SUBUNIT</scope>
    <scope>BIOPHYSICOCHEMICAL PROPERTIES</scope>
    <scope>ACTIVITY REGULATION</scope>
    <scope>PATHWAY</scope>
    <source>
        <tissue>Lupulin gland</tissue>
    </source>
</reference>
<reference key="2">
    <citation type="journal article" date="2019" name="Nat. Prod. Rep.">
        <title>Non-volatile natural products in plant glandular trichomes: chemistry, biological activities and biosynthesis.</title>
        <authorList>
            <person name="Liu Y."/>
            <person name="Jing S.-X."/>
            <person name="Luo S.-H."/>
            <person name="Li S.-H."/>
        </authorList>
    </citation>
    <scope>PATHWAY</scope>
    <scope>REVIEW</scope>
</reference>
<protein>
    <recommendedName>
        <fullName evidence="5">Xanthohumol 4-O-methyltransferase</fullName>
        <ecNumber evidence="3">2.1.1.339</ecNumber>
    </recommendedName>
    <alternativeName>
        <fullName evidence="5">Desmethylxanthohumol 6'-O-methyltransferase</fullName>
        <ecNumber evidence="3">2.1.1.338</ecNumber>
    </alternativeName>
    <alternativeName>
        <fullName evidence="5">Isoliquiritigenin 2'-O-methyltransferase</fullName>
        <ecNumber evidence="3">2.1.1.154</ecNumber>
    </alternativeName>
    <alternativeName>
        <fullName evidence="4">O-methyltransferase 2</fullName>
        <shortName evidence="4">HlOMT2</shortName>
    </alternativeName>
</protein>
<accession>B0ZB56</accession>
<organism>
    <name type="scientific">Humulus lupulus</name>
    <name type="common">European hop</name>
    <dbReference type="NCBI Taxonomy" id="3486"/>
    <lineage>
        <taxon>Eukaryota</taxon>
        <taxon>Viridiplantae</taxon>
        <taxon>Streptophyta</taxon>
        <taxon>Embryophyta</taxon>
        <taxon>Tracheophyta</taxon>
        <taxon>Spermatophyta</taxon>
        <taxon>Magnoliopsida</taxon>
        <taxon>eudicotyledons</taxon>
        <taxon>Gunneridae</taxon>
        <taxon>Pentapetalae</taxon>
        <taxon>rosids</taxon>
        <taxon>fabids</taxon>
        <taxon>Rosales</taxon>
        <taxon>Cannabaceae</taxon>
        <taxon>Humulus</taxon>
    </lineage>
</organism>
<evidence type="ECO:0000250" key="1">
    <source>
        <dbReference type="UniProtKB" id="B0ZB55"/>
    </source>
</evidence>
<evidence type="ECO:0000255" key="2">
    <source>
        <dbReference type="PROSITE-ProRule" id="PRU01020"/>
    </source>
</evidence>
<evidence type="ECO:0000269" key="3">
    <source>
    </source>
</evidence>
<evidence type="ECO:0000303" key="4">
    <source>
    </source>
</evidence>
<evidence type="ECO:0000305" key="5"/>
<evidence type="ECO:0000305" key="6">
    <source>
    </source>
</evidence>
<sequence length="360" mass="39792">MELARNDQTEAALRGEANVWKSINGIADFMVMKCALELRIPDIVHSHSAPITLAQIASSVPDSPSLNLSYLSRIMRLLVRRKIFSQHKSLDGEEVLYGPTHSSRLLLSKTTLPDQVTLAPFVAFMTHPYLSAPWSCLARCVKEGGNGFEMVHGGRQLWDLSPGNPEFNKVFNDGMASTARITTMAILSEYRDVFCGICSLVDVGGEFGGSISAIVKSHPHIKGINYDLPHVVATAPTYTGLVSHVGGNMFEWIPTAVAVFMKWILHDWADEDCVKILKNCRRAMPEKGGKIIIVDIVLEPEGNGLFDDAAVMLDIALMALTRGKERTEKEWKRVLEEGGFPRYQILKIPALTSVIEAYPQ</sequence>
<keyword id="KW-0963">Cytoplasm</keyword>
<keyword id="KW-0489">Methyltransferase</keyword>
<keyword id="KW-0949">S-adenosyl-L-methionine</keyword>
<keyword id="KW-0808">Transferase</keyword>
<gene>
    <name evidence="4" type="primary">OMT2</name>
</gene>
<proteinExistence type="evidence at protein level"/>
<dbReference type="EC" id="2.1.1.339" evidence="3"/>
<dbReference type="EC" id="2.1.1.338" evidence="3"/>
<dbReference type="EC" id="2.1.1.154" evidence="3"/>
<dbReference type="EMBL" id="EU309726">
    <property type="protein sequence ID" value="ABZ89566.1"/>
    <property type="molecule type" value="mRNA"/>
</dbReference>
<dbReference type="SMR" id="B0ZB56"/>
<dbReference type="KEGG" id="ag:ABZ89566"/>
<dbReference type="BRENDA" id="2.1.1.339">
    <property type="organism ID" value="2716"/>
</dbReference>
<dbReference type="GO" id="GO:0005737">
    <property type="term" value="C:cytoplasm"/>
    <property type="evidence" value="ECO:0007669"/>
    <property type="project" value="UniProtKB-SubCell"/>
</dbReference>
<dbReference type="GO" id="GO:0033802">
    <property type="term" value="F:isoliquiritigenin 2'-O-methyltransferase activity"/>
    <property type="evidence" value="ECO:0007669"/>
    <property type="project" value="UniProtKB-EC"/>
</dbReference>
<dbReference type="GO" id="GO:0046983">
    <property type="term" value="F:protein dimerization activity"/>
    <property type="evidence" value="ECO:0007669"/>
    <property type="project" value="InterPro"/>
</dbReference>
<dbReference type="GO" id="GO:0032259">
    <property type="term" value="P:methylation"/>
    <property type="evidence" value="ECO:0007669"/>
    <property type="project" value="UniProtKB-KW"/>
</dbReference>
<dbReference type="Gene3D" id="3.40.50.150">
    <property type="entry name" value="Vaccinia Virus protein VP39"/>
    <property type="match status" value="1"/>
</dbReference>
<dbReference type="Gene3D" id="1.10.10.10">
    <property type="entry name" value="Winged helix-like DNA-binding domain superfamily/Winged helix DNA-binding domain"/>
    <property type="match status" value="1"/>
</dbReference>
<dbReference type="InterPro" id="IPR016461">
    <property type="entry name" value="COMT-like"/>
</dbReference>
<dbReference type="InterPro" id="IPR001077">
    <property type="entry name" value="O_MeTrfase_dom"/>
</dbReference>
<dbReference type="InterPro" id="IPR012967">
    <property type="entry name" value="Plant_O-MeTrfase_dimerisation"/>
</dbReference>
<dbReference type="InterPro" id="IPR029063">
    <property type="entry name" value="SAM-dependent_MTases_sf"/>
</dbReference>
<dbReference type="InterPro" id="IPR036388">
    <property type="entry name" value="WH-like_DNA-bd_sf"/>
</dbReference>
<dbReference type="InterPro" id="IPR036390">
    <property type="entry name" value="WH_DNA-bd_sf"/>
</dbReference>
<dbReference type="PANTHER" id="PTHR11746">
    <property type="entry name" value="O-METHYLTRANSFERASE"/>
    <property type="match status" value="1"/>
</dbReference>
<dbReference type="Pfam" id="PF08100">
    <property type="entry name" value="Dimerisation"/>
    <property type="match status" value="1"/>
</dbReference>
<dbReference type="Pfam" id="PF00891">
    <property type="entry name" value="Methyltransf_2"/>
    <property type="match status" value="1"/>
</dbReference>
<dbReference type="PIRSF" id="PIRSF005739">
    <property type="entry name" value="O-mtase"/>
    <property type="match status" value="1"/>
</dbReference>
<dbReference type="SUPFAM" id="SSF53335">
    <property type="entry name" value="S-adenosyl-L-methionine-dependent methyltransferases"/>
    <property type="match status" value="1"/>
</dbReference>
<dbReference type="SUPFAM" id="SSF46785">
    <property type="entry name" value="Winged helix' DNA-binding domain"/>
    <property type="match status" value="1"/>
</dbReference>
<dbReference type="PROSITE" id="PS51683">
    <property type="entry name" value="SAM_OMT_II"/>
    <property type="match status" value="1"/>
</dbReference>
<feature type="chain" id="PRO_0000439265" description="Xanthohumol 4-O-methyltransferase">
    <location>
        <begin position="1"/>
        <end position="360"/>
    </location>
</feature>
<feature type="active site" description="Proton acceptor" evidence="2">
    <location>
        <position position="266"/>
    </location>
</feature>
<feature type="binding site" evidence="2">
    <location>
        <position position="227"/>
    </location>
    <ligand>
        <name>S-adenosyl-L-methionine</name>
        <dbReference type="ChEBI" id="CHEBI:59789"/>
    </ligand>
</feature>
<name>OMT2_HUMLU</name>
<comment type="function">
    <text evidence="3 6">Involved in the biosynthesis of prenylated phenolics natural products which contribute to the bitter taste of beer and display broad biological activities (Probable). O-methyltransferase with a low substrate selectivity (PubMed:18223037). Methylates chalconaringenin, desmethylxanthohumol, xanthohumol, isoliquiritigenin, butein, 2',4-dihydroxychalcone, resveratrol, genistein and guaiacol (PubMed:18223037). Catalyzes the biosynthesis of 2',4'-dihydroxy-4,6'-dimethoxy-3'-prenylchalcone (4-O-methylxanthohumol) (PubMed:18223037).</text>
</comment>
<comment type="catalytic activity">
    <reaction evidence="3">
        <text>xanthohumol + S-adenosyl-L-methionine = 4-O-methylxanthohumol + S-adenosyl-L-homocysteine + H(+)</text>
        <dbReference type="Rhea" id="RHEA:51704"/>
        <dbReference type="ChEBI" id="CHEBI:15378"/>
        <dbReference type="ChEBI" id="CHEBI:57856"/>
        <dbReference type="ChEBI" id="CHEBI:59789"/>
        <dbReference type="ChEBI" id="CHEBI:66331"/>
        <dbReference type="ChEBI" id="CHEBI:139593"/>
        <dbReference type="EC" id="2.1.1.339"/>
    </reaction>
    <physiologicalReaction direction="left-to-right" evidence="3">
        <dbReference type="Rhea" id="RHEA:51705"/>
    </physiologicalReaction>
</comment>
<comment type="catalytic activity">
    <reaction evidence="3">
        <text>desmethylxanthohumol + S-adenosyl-L-methionine = xanthohumol + S-adenosyl-L-homocysteine + H(+)</text>
        <dbReference type="Rhea" id="RHEA:51696"/>
        <dbReference type="ChEBI" id="CHEBI:15378"/>
        <dbReference type="ChEBI" id="CHEBI:57856"/>
        <dbReference type="ChEBI" id="CHEBI:59789"/>
        <dbReference type="ChEBI" id="CHEBI:66331"/>
        <dbReference type="ChEBI" id="CHEBI:80489"/>
        <dbReference type="EC" id="2.1.1.338"/>
    </reaction>
    <physiologicalReaction direction="left-to-right" evidence="3">
        <dbReference type="Rhea" id="RHEA:51697"/>
    </physiologicalReaction>
</comment>
<comment type="catalytic activity">
    <reaction evidence="3">
        <text>isoliquiritigenin + S-adenosyl-L-methionine = 2'-O-methylisoliquiritigenin + S-adenosyl-L-homocysteine + H(+)</text>
        <dbReference type="Rhea" id="RHEA:21608"/>
        <dbReference type="ChEBI" id="CHEBI:15378"/>
        <dbReference type="ChEBI" id="CHEBI:57856"/>
        <dbReference type="ChEBI" id="CHEBI:59789"/>
        <dbReference type="ChEBI" id="CHEBI:310312"/>
        <dbReference type="ChEBI" id="CHEBI:519567"/>
        <dbReference type="EC" id="2.1.1.154"/>
    </reaction>
    <physiologicalReaction direction="left-to-right" evidence="3">
        <dbReference type="Rhea" id="RHEA:21609"/>
    </physiologicalReaction>
</comment>
<comment type="catalytic activity">
    <reaction evidence="3">
        <text>trans-resveratrol + S-adenosyl-L-methionine = 3-methoxy-4',5-dihydroxy-trans-stilbene + S-adenosyl-L-homocysteine + H(+)</text>
        <dbReference type="Rhea" id="RHEA:32111"/>
        <dbReference type="ChEBI" id="CHEBI:15378"/>
        <dbReference type="ChEBI" id="CHEBI:45713"/>
        <dbReference type="ChEBI" id="CHEBI:57856"/>
        <dbReference type="ChEBI" id="CHEBI:59789"/>
        <dbReference type="ChEBI" id="CHEBI:63672"/>
    </reaction>
    <physiologicalReaction direction="left-to-right" evidence="3">
        <dbReference type="Rhea" id="RHEA:32112"/>
    </physiologicalReaction>
</comment>
<comment type="activity regulation">
    <text evidence="3">Inhibited by S-adenosyl homocysteine.</text>
</comment>
<comment type="biophysicochemical properties">
    <kinetics>
        <KM evidence="3">237 uM for chalconaringenin</KM>
        <KM evidence="3">23 uM for desmethylxanthohumol</KM>
        <KM evidence="3">31 uM for xanthohumol</KM>
        <KM evidence="3">19 uM for resveratrol</KM>
        <KM evidence="3">34 uM for S-adenosyl-L-methionine</KM>
        <Vmax evidence="3">914.0 pmol/sec/mg enzyme with chalconaringenin as substrate</Vmax>
        <Vmax evidence="3">468.0 pmol/sec/mg enzyme with desmethylxanthohumol as substrate</Vmax>
        <Vmax evidence="3">451.0 pmol/sec/mg enzyme with xanthohumol as substrate</Vmax>
        <Vmax evidence="3">908.0 pmol/sec/mg enzyme with resveratrol as substrate</Vmax>
        <Vmax evidence="3">402.0 pmol/sec/mg enzyme toward S-adenosyl-L-methionine</Vmax>
    </kinetics>
    <phDependence>
        <text evidence="3">Optimum pH is 8.5.</text>
    </phDependence>
    <temperatureDependence>
        <text evidence="3">Optimum temperature is 39 degrees Celsius.</text>
    </temperatureDependence>
</comment>
<comment type="pathway">
    <text evidence="6">Secondary metabolite biosynthesis.</text>
</comment>
<comment type="subunit">
    <text evidence="3">Homodimer.</text>
</comment>
<comment type="subcellular location">
    <subcellularLocation>
        <location evidence="1">Cytoplasm</location>
    </subcellularLocation>
</comment>
<comment type="tissue specificity">
    <text evidence="3">Highly expressed in lupulin glands. Detected in cones, male flowers and roots.</text>
</comment>
<comment type="similarity">
    <text evidence="5">Belongs to the class I-like SAM-binding methyltransferase superfamily. Cation-independent O-methyltransferase family.</text>
</comment>